<organism>
    <name type="scientific">Bacillus mycoides (strain KBAB4)</name>
    <name type="common">Bacillus weihenstephanensis</name>
    <dbReference type="NCBI Taxonomy" id="315730"/>
    <lineage>
        <taxon>Bacteria</taxon>
        <taxon>Bacillati</taxon>
        <taxon>Bacillota</taxon>
        <taxon>Bacilli</taxon>
        <taxon>Bacillales</taxon>
        <taxon>Bacillaceae</taxon>
        <taxon>Bacillus</taxon>
        <taxon>Bacillus cereus group</taxon>
    </lineage>
</organism>
<evidence type="ECO:0000255" key="1">
    <source>
        <dbReference type="HAMAP-Rule" id="MF_00093"/>
    </source>
</evidence>
<feature type="chain" id="PRO_1000093422" description="Peptide chain release factor 1">
    <location>
        <begin position="1"/>
        <end position="355"/>
    </location>
</feature>
<feature type="modified residue" description="N5-methylglutamine" evidence="1">
    <location>
        <position position="233"/>
    </location>
</feature>
<gene>
    <name evidence="1" type="primary">prfA</name>
    <name type="ordered locus">BcerKBAB4_5127</name>
</gene>
<dbReference type="EMBL" id="CP000903">
    <property type="protein sequence ID" value="ABY46273.1"/>
    <property type="molecule type" value="Genomic_DNA"/>
</dbReference>
<dbReference type="RefSeq" id="WP_002139009.1">
    <property type="nucleotide sequence ID" value="NC_010184.1"/>
</dbReference>
<dbReference type="SMR" id="A9VSC7"/>
<dbReference type="KEGG" id="bwe:BcerKBAB4_5127"/>
<dbReference type="eggNOG" id="COG0216">
    <property type="taxonomic scope" value="Bacteria"/>
</dbReference>
<dbReference type="HOGENOM" id="CLU_036856_0_1_9"/>
<dbReference type="Proteomes" id="UP000002154">
    <property type="component" value="Chromosome"/>
</dbReference>
<dbReference type="GO" id="GO:0005737">
    <property type="term" value="C:cytoplasm"/>
    <property type="evidence" value="ECO:0007669"/>
    <property type="project" value="UniProtKB-SubCell"/>
</dbReference>
<dbReference type="GO" id="GO:0016149">
    <property type="term" value="F:translation release factor activity, codon specific"/>
    <property type="evidence" value="ECO:0007669"/>
    <property type="project" value="UniProtKB-UniRule"/>
</dbReference>
<dbReference type="FunFam" id="3.30.160.20:FF:000004">
    <property type="entry name" value="Peptide chain release factor 1"/>
    <property type="match status" value="1"/>
</dbReference>
<dbReference type="FunFam" id="3.30.70.1660:FF:000002">
    <property type="entry name" value="Peptide chain release factor 1"/>
    <property type="match status" value="1"/>
</dbReference>
<dbReference type="FunFam" id="3.30.70.1660:FF:000004">
    <property type="entry name" value="Peptide chain release factor 1"/>
    <property type="match status" value="1"/>
</dbReference>
<dbReference type="Gene3D" id="3.30.160.20">
    <property type="match status" value="1"/>
</dbReference>
<dbReference type="Gene3D" id="3.30.70.1660">
    <property type="match status" value="1"/>
</dbReference>
<dbReference type="Gene3D" id="6.10.140.1950">
    <property type="match status" value="1"/>
</dbReference>
<dbReference type="HAMAP" id="MF_00093">
    <property type="entry name" value="Rel_fac_1"/>
    <property type="match status" value="1"/>
</dbReference>
<dbReference type="InterPro" id="IPR005139">
    <property type="entry name" value="PCRF"/>
</dbReference>
<dbReference type="InterPro" id="IPR000352">
    <property type="entry name" value="Pep_chain_release_fac_I"/>
</dbReference>
<dbReference type="InterPro" id="IPR045853">
    <property type="entry name" value="Pep_chain_release_fac_I_sf"/>
</dbReference>
<dbReference type="InterPro" id="IPR050057">
    <property type="entry name" value="Prokaryotic/Mito_RF"/>
</dbReference>
<dbReference type="InterPro" id="IPR004373">
    <property type="entry name" value="RF-1"/>
</dbReference>
<dbReference type="NCBIfam" id="TIGR00019">
    <property type="entry name" value="prfA"/>
    <property type="match status" value="1"/>
</dbReference>
<dbReference type="NCBIfam" id="NF001859">
    <property type="entry name" value="PRK00591.1"/>
    <property type="match status" value="1"/>
</dbReference>
<dbReference type="PANTHER" id="PTHR43804">
    <property type="entry name" value="LD18447P"/>
    <property type="match status" value="1"/>
</dbReference>
<dbReference type="PANTHER" id="PTHR43804:SF7">
    <property type="entry name" value="LD18447P"/>
    <property type="match status" value="1"/>
</dbReference>
<dbReference type="Pfam" id="PF03462">
    <property type="entry name" value="PCRF"/>
    <property type="match status" value="1"/>
</dbReference>
<dbReference type="Pfam" id="PF00472">
    <property type="entry name" value="RF-1"/>
    <property type="match status" value="1"/>
</dbReference>
<dbReference type="SMART" id="SM00937">
    <property type="entry name" value="PCRF"/>
    <property type="match status" value="1"/>
</dbReference>
<dbReference type="SUPFAM" id="SSF75620">
    <property type="entry name" value="Release factor"/>
    <property type="match status" value="1"/>
</dbReference>
<dbReference type="PROSITE" id="PS00745">
    <property type="entry name" value="RF_PROK_I"/>
    <property type="match status" value="1"/>
</dbReference>
<proteinExistence type="inferred from homology"/>
<accession>A9VSC7</accession>
<keyword id="KW-0963">Cytoplasm</keyword>
<keyword id="KW-0488">Methylation</keyword>
<keyword id="KW-0648">Protein biosynthesis</keyword>
<protein>
    <recommendedName>
        <fullName evidence="1">Peptide chain release factor 1</fullName>
        <shortName evidence="1">RF-1</shortName>
    </recommendedName>
</protein>
<comment type="function">
    <text evidence="1">Peptide chain release factor 1 directs the termination of translation in response to the peptide chain termination codons UAG and UAA.</text>
</comment>
<comment type="subcellular location">
    <subcellularLocation>
        <location evidence="1">Cytoplasm</location>
    </subcellularLocation>
</comment>
<comment type="PTM">
    <text evidence="1">Methylated by PrmC. Methylation increases the termination efficiency of RF1.</text>
</comment>
<comment type="similarity">
    <text evidence="1">Belongs to the prokaryotic/mitochondrial release factor family.</text>
</comment>
<reference key="1">
    <citation type="journal article" date="2008" name="Chem. Biol. Interact.">
        <title>Extending the Bacillus cereus group genomics to putative food-borne pathogens of different toxicity.</title>
        <authorList>
            <person name="Lapidus A."/>
            <person name="Goltsman E."/>
            <person name="Auger S."/>
            <person name="Galleron N."/>
            <person name="Segurens B."/>
            <person name="Dossat C."/>
            <person name="Land M.L."/>
            <person name="Broussolle V."/>
            <person name="Brillard J."/>
            <person name="Guinebretiere M.-H."/>
            <person name="Sanchis V."/>
            <person name="Nguen-the C."/>
            <person name="Lereclus D."/>
            <person name="Richardson P."/>
            <person name="Wincker P."/>
            <person name="Weissenbach J."/>
            <person name="Ehrlich S.D."/>
            <person name="Sorokin A."/>
        </authorList>
    </citation>
    <scope>NUCLEOTIDE SEQUENCE [LARGE SCALE GENOMIC DNA]</scope>
    <source>
        <strain>KBAB4</strain>
    </source>
</reference>
<name>RF1_BACMK</name>
<sequence length="355" mass="40341">MLDRLQAVENRYEKLNELLSDPEVISDTNKLREYSKEQSDIQDTVEVYREYKDVREQLRDAKAMLEDKLDADMRDMVKEEVSELEGQEKTLSERLKILLVPKDPNDDKNVIVEVRGAAGGDEAALFAGDLYRMYSRYAEVQGWKTEIIEASYTELGGYKEIIFMINGKGAFAKLKFENGAHRVQRVPETESGGRIHTSTATVAVLPEAEEVEINIHEKDVRVDTFASSGPGGQSVNTTMSAVRLTHLPTGVVVSCQDEKSQIKNKEKAMKVLRARVYDKFRQEAQAEYDQNRKQAVGTGDRSERIRTYNFPQNRVTDHRIGLTIQKLDQILQGKLDDFINALVMEDQAQKMEAAE</sequence>